<evidence type="ECO:0000250" key="1"/>
<evidence type="ECO:0000250" key="2">
    <source>
        <dbReference type="UniProtKB" id="Q15631"/>
    </source>
</evidence>
<evidence type="ECO:0000250" key="3">
    <source>
        <dbReference type="UniProtKB" id="Q62348"/>
    </source>
</evidence>
<evidence type="ECO:0000255" key="4"/>
<evidence type="ECO:0000305" key="5"/>
<dbReference type="EC" id="3.1.-.-" evidence="3"/>
<dbReference type="EMBL" id="CR860070">
    <property type="protein sequence ID" value="CAH92218.1"/>
    <property type="molecule type" value="mRNA"/>
</dbReference>
<dbReference type="RefSeq" id="NP_001128876.2">
    <property type="nucleotide sequence ID" value="NM_001135404.2"/>
</dbReference>
<dbReference type="SMR" id="Q5R7P2"/>
<dbReference type="STRING" id="9601.ENSPPYP00000014254"/>
<dbReference type="GeneID" id="100189807"/>
<dbReference type="KEGG" id="pon:100189807"/>
<dbReference type="CTD" id="7247"/>
<dbReference type="eggNOG" id="KOG3067">
    <property type="taxonomic scope" value="Eukaryota"/>
</dbReference>
<dbReference type="InParanoid" id="Q5R7P2"/>
<dbReference type="OrthoDB" id="829at2759"/>
<dbReference type="Proteomes" id="UP000001595">
    <property type="component" value="Unplaced"/>
</dbReference>
<dbReference type="GO" id="GO:0005737">
    <property type="term" value="C:cytoplasm"/>
    <property type="evidence" value="ECO:0007669"/>
    <property type="project" value="UniProtKB-SubCell"/>
</dbReference>
<dbReference type="GO" id="GO:0005634">
    <property type="term" value="C:nucleus"/>
    <property type="evidence" value="ECO:0007669"/>
    <property type="project" value="UniProtKB-SubCell"/>
</dbReference>
<dbReference type="GO" id="GO:0004519">
    <property type="term" value="F:endonuclease activity"/>
    <property type="evidence" value="ECO:0007669"/>
    <property type="project" value="UniProtKB-KW"/>
</dbReference>
<dbReference type="GO" id="GO:0003723">
    <property type="term" value="F:RNA binding"/>
    <property type="evidence" value="ECO:0007669"/>
    <property type="project" value="UniProtKB-KW"/>
</dbReference>
<dbReference type="GO" id="GO:0043565">
    <property type="term" value="F:sequence-specific DNA binding"/>
    <property type="evidence" value="ECO:0007669"/>
    <property type="project" value="InterPro"/>
</dbReference>
<dbReference type="GO" id="GO:0003697">
    <property type="term" value="F:single-stranded DNA binding"/>
    <property type="evidence" value="ECO:0007669"/>
    <property type="project" value="InterPro"/>
</dbReference>
<dbReference type="GO" id="GO:0016070">
    <property type="term" value="P:RNA metabolic process"/>
    <property type="evidence" value="ECO:0007669"/>
    <property type="project" value="InterPro"/>
</dbReference>
<dbReference type="CDD" id="cd14819">
    <property type="entry name" value="Translin"/>
    <property type="match status" value="1"/>
</dbReference>
<dbReference type="FunFam" id="1.20.58.200:FF:000002">
    <property type="entry name" value="Putative translin"/>
    <property type="match status" value="1"/>
</dbReference>
<dbReference type="FunFam" id="1.20.58.190:FF:000001">
    <property type="entry name" value="Translin"/>
    <property type="match status" value="1"/>
</dbReference>
<dbReference type="Gene3D" id="1.20.58.190">
    <property type="entry name" value="Translin, domain 1"/>
    <property type="match status" value="1"/>
</dbReference>
<dbReference type="Gene3D" id="1.20.58.200">
    <property type="entry name" value="Translin, domain 2"/>
    <property type="match status" value="1"/>
</dbReference>
<dbReference type="InterPro" id="IPR033956">
    <property type="entry name" value="Translin"/>
</dbReference>
<dbReference type="InterPro" id="IPR016069">
    <property type="entry name" value="Translin_C"/>
</dbReference>
<dbReference type="InterPro" id="IPR002848">
    <property type="entry name" value="Translin_fam"/>
</dbReference>
<dbReference type="InterPro" id="IPR016068">
    <property type="entry name" value="Translin_N"/>
</dbReference>
<dbReference type="InterPro" id="IPR036081">
    <property type="entry name" value="Translin_sf"/>
</dbReference>
<dbReference type="PANTHER" id="PTHR10741">
    <property type="entry name" value="TRANSLIN AND TRANSLIN ASSOCIATED PROTEIN X"/>
    <property type="match status" value="1"/>
</dbReference>
<dbReference type="Pfam" id="PF01997">
    <property type="entry name" value="Translin"/>
    <property type="match status" value="1"/>
</dbReference>
<dbReference type="SUPFAM" id="SSF74784">
    <property type="entry name" value="Translin"/>
    <property type="match status" value="1"/>
</dbReference>
<keyword id="KW-0007">Acetylation</keyword>
<keyword id="KW-0963">Cytoplasm</keyword>
<keyword id="KW-0238">DNA-binding</keyword>
<keyword id="KW-0255">Endonuclease</keyword>
<keyword id="KW-0378">Hydrolase</keyword>
<keyword id="KW-0540">Nuclease</keyword>
<keyword id="KW-0539">Nucleus</keyword>
<keyword id="KW-0597">Phosphoprotein</keyword>
<keyword id="KW-1185">Reference proteome</keyword>
<keyword id="KW-0694">RNA-binding</keyword>
<gene>
    <name type="primary">TSN</name>
</gene>
<proteinExistence type="evidence at transcript level"/>
<organism>
    <name type="scientific">Pongo abelii</name>
    <name type="common">Sumatran orangutan</name>
    <name type="synonym">Pongo pygmaeus abelii</name>
    <dbReference type="NCBI Taxonomy" id="9601"/>
    <lineage>
        <taxon>Eukaryota</taxon>
        <taxon>Metazoa</taxon>
        <taxon>Chordata</taxon>
        <taxon>Craniata</taxon>
        <taxon>Vertebrata</taxon>
        <taxon>Euteleostomi</taxon>
        <taxon>Mammalia</taxon>
        <taxon>Eutheria</taxon>
        <taxon>Euarchontoglires</taxon>
        <taxon>Primates</taxon>
        <taxon>Haplorrhini</taxon>
        <taxon>Catarrhini</taxon>
        <taxon>Hominidae</taxon>
        <taxon>Pongo</taxon>
    </lineage>
</organism>
<comment type="function">
    <text evidence="2">DNA-binding protein that specifically recognizes consensus sequences at the breakpoint junctions in chromosomal translocations, mostly involving immunoglobulin (Ig)/T-cell receptor gene segments. Seems to recognize single-stranded DNA ends generated by staggered breaks occurring at recombination hot spots.</text>
</comment>
<comment type="function">
    <text evidence="3">Exhibits both single-stranded and double-stranded endoribonuclease activity. May act as an activator of RNA-induced silencing complex (RISC) by facilitating endonucleolytic cleavage of the siRNA passenger strand.</text>
</comment>
<comment type="subunit">
    <text evidence="2">Ring-shaped heterooctamer of six TSN and two TSNAX subunits, DNA/RNA binding occurs inside the ring.</text>
</comment>
<comment type="subcellular location">
    <subcellularLocation>
        <location evidence="2">Cytoplasm</location>
    </subcellularLocation>
    <subcellularLocation>
        <location evidence="2">Nucleus</location>
    </subcellularLocation>
</comment>
<comment type="similarity">
    <text evidence="5">Belongs to the translin family.</text>
</comment>
<feature type="chain" id="PRO_0000270210" description="Translin">
    <location>
        <begin position="1"/>
        <end position="228"/>
    </location>
</feature>
<feature type="region of interest" description="DNA/RNA binding" evidence="1">
    <location>
        <begin position="86"/>
        <end position="90"/>
    </location>
</feature>
<feature type="region of interest" description="Leucine-zipper" evidence="4">
    <location>
        <begin position="177"/>
        <end position="198"/>
    </location>
</feature>
<feature type="modified residue" description="N6-acetyllysine" evidence="2">
    <location>
        <position position="187"/>
    </location>
</feature>
<feature type="modified residue" description="Phosphoserine" evidence="2">
    <location>
        <position position="190"/>
    </location>
</feature>
<feature type="modified residue" description="N6-acetyllysine" evidence="2">
    <location>
        <position position="199"/>
    </location>
</feature>
<sequence>MSVSEIFVELQGFLAAEQDIREEIRKVVQSLEQTAREILTLLQGVHQGAGFQDIPKRCLKAREHFGTVKTHLTSLKTKFPAEQYYRFHEHWRFVLQRLVFLAAFVVYLETETLVTREAVTEILGMEPDREKGFHLDVEDYLSGVLILASELSRLSVNSVTAGDYSRPLHISTFINELDSGFRLLNLKNDSLRKRYDGLKYDVKKVEEVVYDLSIRGFNKETAAACVEK</sequence>
<protein>
    <recommendedName>
        <fullName>Translin</fullName>
        <ecNumber evidence="3">3.1.-.-</ecNumber>
    </recommendedName>
    <alternativeName>
        <fullName>Component 3 of promoter of RISC</fullName>
        <shortName>C3PO</shortName>
    </alternativeName>
</protein>
<reference key="1">
    <citation type="submission" date="2004-11" db="EMBL/GenBank/DDBJ databases">
        <authorList>
            <consortium name="The German cDNA consortium"/>
        </authorList>
    </citation>
    <scope>NUCLEOTIDE SEQUENCE [LARGE SCALE MRNA]</scope>
    <source>
        <tissue>Kidney</tissue>
    </source>
</reference>
<name>TSN_PONAB</name>
<accession>Q5R7P2</accession>